<sequence>MAQTEAMAEIKQQALVDINEAQNEKALQDVKVKYLGKKGSVTGLMKHMKDLPNEEKPAYGQQVNEVRQTIEKEIQARHELLGNEQLEQQLKEEKIDVTLPSRKIAIGAKHPLTRTIEEIEDLFLGLGYEIVDGFEVEQDYYNFEALNLPKSHPARDMQDSFYITDEILMRTHTSPVQARTMEKRNGEGPVKILCPGKVYRRDSDDATHSHQFTQIEGLVVDENIKMSDLKGTLELLAKQLFGEDREIRLRPSYFPFTEPSVEVDVSCFKCKGEGCNVCKHTGWIEILGAGMVHPNVLEMAGFDSNKYTGFAFGMGPDRIAMLKYGIEDIRHFYTNDVRFLSQFKAVEDRGEK</sequence>
<dbReference type="EC" id="6.1.1.20" evidence="1"/>
<dbReference type="EMBL" id="AP008934">
    <property type="protein sequence ID" value="BAE18802.1"/>
    <property type="molecule type" value="Genomic_DNA"/>
</dbReference>
<dbReference type="RefSeq" id="WP_002483641.1">
    <property type="nucleotide sequence ID" value="NZ_MTGA01000039.1"/>
</dbReference>
<dbReference type="SMR" id="Q49WQ5"/>
<dbReference type="GeneID" id="66867834"/>
<dbReference type="KEGG" id="ssp:SSP1657"/>
<dbReference type="eggNOG" id="COG0016">
    <property type="taxonomic scope" value="Bacteria"/>
</dbReference>
<dbReference type="HOGENOM" id="CLU_025086_0_1_9"/>
<dbReference type="OrthoDB" id="9800719at2"/>
<dbReference type="Proteomes" id="UP000006371">
    <property type="component" value="Chromosome"/>
</dbReference>
<dbReference type="GO" id="GO:0005737">
    <property type="term" value="C:cytoplasm"/>
    <property type="evidence" value="ECO:0007669"/>
    <property type="project" value="UniProtKB-SubCell"/>
</dbReference>
<dbReference type="GO" id="GO:0005524">
    <property type="term" value="F:ATP binding"/>
    <property type="evidence" value="ECO:0007669"/>
    <property type="project" value="UniProtKB-UniRule"/>
</dbReference>
<dbReference type="GO" id="GO:0140096">
    <property type="term" value="F:catalytic activity, acting on a protein"/>
    <property type="evidence" value="ECO:0007669"/>
    <property type="project" value="UniProtKB-ARBA"/>
</dbReference>
<dbReference type="GO" id="GO:0000287">
    <property type="term" value="F:magnesium ion binding"/>
    <property type="evidence" value="ECO:0007669"/>
    <property type="project" value="UniProtKB-UniRule"/>
</dbReference>
<dbReference type="GO" id="GO:0004826">
    <property type="term" value="F:phenylalanine-tRNA ligase activity"/>
    <property type="evidence" value="ECO:0007669"/>
    <property type="project" value="UniProtKB-UniRule"/>
</dbReference>
<dbReference type="GO" id="GO:0016740">
    <property type="term" value="F:transferase activity"/>
    <property type="evidence" value="ECO:0007669"/>
    <property type="project" value="UniProtKB-ARBA"/>
</dbReference>
<dbReference type="GO" id="GO:0000049">
    <property type="term" value="F:tRNA binding"/>
    <property type="evidence" value="ECO:0007669"/>
    <property type="project" value="InterPro"/>
</dbReference>
<dbReference type="GO" id="GO:0006432">
    <property type="term" value="P:phenylalanyl-tRNA aminoacylation"/>
    <property type="evidence" value="ECO:0007669"/>
    <property type="project" value="UniProtKB-UniRule"/>
</dbReference>
<dbReference type="CDD" id="cd00496">
    <property type="entry name" value="PheRS_alpha_core"/>
    <property type="match status" value="1"/>
</dbReference>
<dbReference type="FunFam" id="3.30.930.10:FF:000003">
    <property type="entry name" value="Phenylalanine--tRNA ligase alpha subunit"/>
    <property type="match status" value="1"/>
</dbReference>
<dbReference type="Gene3D" id="3.30.930.10">
    <property type="entry name" value="Bira Bifunctional Protein, Domain 2"/>
    <property type="match status" value="1"/>
</dbReference>
<dbReference type="HAMAP" id="MF_00281">
    <property type="entry name" value="Phe_tRNA_synth_alpha1"/>
    <property type="match status" value="1"/>
</dbReference>
<dbReference type="InterPro" id="IPR006195">
    <property type="entry name" value="aa-tRNA-synth_II"/>
</dbReference>
<dbReference type="InterPro" id="IPR045864">
    <property type="entry name" value="aa-tRNA-synth_II/BPL/LPL"/>
</dbReference>
<dbReference type="InterPro" id="IPR004529">
    <property type="entry name" value="Phe-tRNA-synth_IIc_asu"/>
</dbReference>
<dbReference type="InterPro" id="IPR004188">
    <property type="entry name" value="Phe-tRNA_ligase_II_N"/>
</dbReference>
<dbReference type="InterPro" id="IPR022911">
    <property type="entry name" value="Phe_tRNA_ligase_alpha1_bac"/>
</dbReference>
<dbReference type="InterPro" id="IPR002319">
    <property type="entry name" value="Phenylalanyl-tRNA_Synthase"/>
</dbReference>
<dbReference type="InterPro" id="IPR010978">
    <property type="entry name" value="tRNA-bd_arm"/>
</dbReference>
<dbReference type="NCBIfam" id="TIGR00468">
    <property type="entry name" value="pheS"/>
    <property type="match status" value="1"/>
</dbReference>
<dbReference type="PANTHER" id="PTHR11538:SF41">
    <property type="entry name" value="PHENYLALANINE--TRNA LIGASE, MITOCHONDRIAL"/>
    <property type="match status" value="1"/>
</dbReference>
<dbReference type="PANTHER" id="PTHR11538">
    <property type="entry name" value="PHENYLALANYL-TRNA SYNTHETASE"/>
    <property type="match status" value="1"/>
</dbReference>
<dbReference type="Pfam" id="PF02912">
    <property type="entry name" value="Phe_tRNA-synt_N"/>
    <property type="match status" value="1"/>
</dbReference>
<dbReference type="Pfam" id="PF01409">
    <property type="entry name" value="tRNA-synt_2d"/>
    <property type="match status" value="1"/>
</dbReference>
<dbReference type="SUPFAM" id="SSF55681">
    <property type="entry name" value="Class II aaRS and biotin synthetases"/>
    <property type="match status" value="1"/>
</dbReference>
<dbReference type="SUPFAM" id="SSF46589">
    <property type="entry name" value="tRNA-binding arm"/>
    <property type="match status" value="1"/>
</dbReference>
<dbReference type="PROSITE" id="PS50862">
    <property type="entry name" value="AA_TRNA_LIGASE_II"/>
    <property type="match status" value="1"/>
</dbReference>
<keyword id="KW-0030">Aminoacyl-tRNA synthetase</keyword>
<keyword id="KW-0067">ATP-binding</keyword>
<keyword id="KW-0963">Cytoplasm</keyword>
<keyword id="KW-0436">Ligase</keyword>
<keyword id="KW-0460">Magnesium</keyword>
<keyword id="KW-0479">Metal-binding</keyword>
<keyword id="KW-0547">Nucleotide-binding</keyword>
<keyword id="KW-0648">Protein biosynthesis</keyword>
<keyword id="KW-1185">Reference proteome</keyword>
<name>SYFA_STAS1</name>
<evidence type="ECO:0000255" key="1">
    <source>
        <dbReference type="HAMAP-Rule" id="MF_00281"/>
    </source>
</evidence>
<protein>
    <recommendedName>
        <fullName evidence="1">Phenylalanine--tRNA ligase alpha subunit</fullName>
        <ecNumber evidence="1">6.1.1.20</ecNumber>
    </recommendedName>
    <alternativeName>
        <fullName evidence="1">Phenylalanyl-tRNA synthetase alpha subunit</fullName>
        <shortName evidence="1">PheRS</shortName>
    </alternativeName>
</protein>
<accession>Q49WQ5</accession>
<proteinExistence type="inferred from homology"/>
<feature type="chain" id="PRO_0000232029" description="Phenylalanine--tRNA ligase alpha subunit">
    <location>
        <begin position="1"/>
        <end position="352"/>
    </location>
</feature>
<feature type="binding site" evidence="1">
    <location>
        <position position="258"/>
    </location>
    <ligand>
        <name>Mg(2+)</name>
        <dbReference type="ChEBI" id="CHEBI:18420"/>
        <note>shared with beta subunit</note>
    </ligand>
</feature>
<reference key="1">
    <citation type="journal article" date="2005" name="Proc. Natl. Acad. Sci. U.S.A.">
        <title>Whole genome sequence of Staphylococcus saprophyticus reveals the pathogenesis of uncomplicated urinary tract infection.</title>
        <authorList>
            <person name="Kuroda M."/>
            <person name="Yamashita A."/>
            <person name="Hirakawa H."/>
            <person name="Kumano M."/>
            <person name="Morikawa K."/>
            <person name="Higashide M."/>
            <person name="Maruyama A."/>
            <person name="Inose Y."/>
            <person name="Matoba K."/>
            <person name="Toh H."/>
            <person name="Kuhara S."/>
            <person name="Hattori M."/>
            <person name="Ohta T."/>
        </authorList>
    </citation>
    <scope>NUCLEOTIDE SEQUENCE [LARGE SCALE GENOMIC DNA]</scope>
    <source>
        <strain>ATCC 15305 / DSM 20229 / NCIMB 8711 / NCTC 7292 / S-41</strain>
    </source>
</reference>
<gene>
    <name evidence="1" type="primary">pheS</name>
    <name type="ordered locus">SSP1657</name>
</gene>
<comment type="catalytic activity">
    <reaction evidence="1">
        <text>tRNA(Phe) + L-phenylalanine + ATP = L-phenylalanyl-tRNA(Phe) + AMP + diphosphate + H(+)</text>
        <dbReference type="Rhea" id="RHEA:19413"/>
        <dbReference type="Rhea" id="RHEA-COMP:9668"/>
        <dbReference type="Rhea" id="RHEA-COMP:9699"/>
        <dbReference type="ChEBI" id="CHEBI:15378"/>
        <dbReference type="ChEBI" id="CHEBI:30616"/>
        <dbReference type="ChEBI" id="CHEBI:33019"/>
        <dbReference type="ChEBI" id="CHEBI:58095"/>
        <dbReference type="ChEBI" id="CHEBI:78442"/>
        <dbReference type="ChEBI" id="CHEBI:78531"/>
        <dbReference type="ChEBI" id="CHEBI:456215"/>
        <dbReference type="EC" id="6.1.1.20"/>
    </reaction>
</comment>
<comment type="cofactor">
    <cofactor evidence="1">
        <name>Mg(2+)</name>
        <dbReference type="ChEBI" id="CHEBI:18420"/>
    </cofactor>
    <text evidence="1">Binds 2 magnesium ions per tetramer.</text>
</comment>
<comment type="subunit">
    <text evidence="1">Tetramer of two alpha and two beta subunits.</text>
</comment>
<comment type="subcellular location">
    <subcellularLocation>
        <location evidence="1">Cytoplasm</location>
    </subcellularLocation>
</comment>
<comment type="similarity">
    <text evidence="1">Belongs to the class-II aminoacyl-tRNA synthetase family. Phe-tRNA synthetase alpha subunit type 1 subfamily.</text>
</comment>
<organism>
    <name type="scientific">Staphylococcus saprophyticus subsp. saprophyticus (strain ATCC 15305 / DSM 20229 / NCIMB 8711 / NCTC 7292 / S-41)</name>
    <dbReference type="NCBI Taxonomy" id="342451"/>
    <lineage>
        <taxon>Bacteria</taxon>
        <taxon>Bacillati</taxon>
        <taxon>Bacillota</taxon>
        <taxon>Bacilli</taxon>
        <taxon>Bacillales</taxon>
        <taxon>Staphylococcaceae</taxon>
        <taxon>Staphylococcus</taxon>
    </lineage>
</organism>